<accession>F5CPF0</accession>
<comment type="function">
    <text>PLA2 catalyzes the calcium-dependent hydrolysis of the 2-acyl groups in 3-sn-phosphoglycerides.</text>
</comment>
<comment type="catalytic activity">
    <reaction evidence="3 4">
        <text>a 1,2-diacyl-sn-glycero-3-phosphocholine + H2O = a 1-acyl-sn-glycero-3-phosphocholine + a fatty acid + H(+)</text>
        <dbReference type="Rhea" id="RHEA:15801"/>
        <dbReference type="ChEBI" id="CHEBI:15377"/>
        <dbReference type="ChEBI" id="CHEBI:15378"/>
        <dbReference type="ChEBI" id="CHEBI:28868"/>
        <dbReference type="ChEBI" id="CHEBI:57643"/>
        <dbReference type="ChEBI" id="CHEBI:58168"/>
        <dbReference type="EC" id="3.1.1.4"/>
    </reaction>
</comment>
<comment type="cofactor">
    <cofactor evidence="1">
        <name>Ca(2+)</name>
        <dbReference type="ChEBI" id="CHEBI:29108"/>
    </cofactor>
    <text evidence="1">Binds 1 Ca(2+) ion.</text>
</comment>
<comment type="subcellular location">
    <subcellularLocation>
        <location>Secreted</location>
    </subcellularLocation>
</comment>
<comment type="tissue specificity">
    <text>Expressed by the venom gland.</text>
</comment>
<comment type="similarity">
    <text evidence="5">Belongs to the phospholipase A2 family. Group I subfamily. D49 sub-subfamily.</text>
</comment>
<dbReference type="EC" id="3.1.1.4"/>
<dbReference type="EMBL" id="JF754488">
    <property type="protein sequence ID" value="AED89577.1"/>
    <property type="molecule type" value="mRNA"/>
</dbReference>
<dbReference type="SMR" id="F5CPF0"/>
<dbReference type="GO" id="GO:0005576">
    <property type="term" value="C:extracellular region"/>
    <property type="evidence" value="ECO:0007669"/>
    <property type="project" value="UniProtKB-SubCell"/>
</dbReference>
<dbReference type="GO" id="GO:0005509">
    <property type="term" value="F:calcium ion binding"/>
    <property type="evidence" value="ECO:0007669"/>
    <property type="project" value="InterPro"/>
</dbReference>
<dbReference type="GO" id="GO:0047498">
    <property type="term" value="F:calcium-dependent phospholipase A2 activity"/>
    <property type="evidence" value="ECO:0007669"/>
    <property type="project" value="TreeGrafter"/>
</dbReference>
<dbReference type="GO" id="GO:0005543">
    <property type="term" value="F:phospholipid binding"/>
    <property type="evidence" value="ECO:0007669"/>
    <property type="project" value="TreeGrafter"/>
</dbReference>
<dbReference type="GO" id="GO:0090729">
    <property type="term" value="F:toxin activity"/>
    <property type="evidence" value="ECO:0007669"/>
    <property type="project" value="UniProtKB-KW"/>
</dbReference>
<dbReference type="GO" id="GO:0050482">
    <property type="term" value="P:arachidonate secretion"/>
    <property type="evidence" value="ECO:0007669"/>
    <property type="project" value="InterPro"/>
</dbReference>
<dbReference type="GO" id="GO:0016042">
    <property type="term" value="P:lipid catabolic process"/>
    <property type="evidence" value="ECO:0007669"/>
    <property type="project" value="UniProtKB-KW"/>
</dbReference>
<dbReference type="GO" id="GO:0006644">
    <property type="term" value="P:phospholipid metabolic process"/>
    <property type="evidence" value="ECO:0007669"/>
    <property type="project" value="InterPro"/>
</dbReference>
<dbReference type="CDD" id="cd00125">
    <property type="entry name" value="PLA2c"/>
    <property type="match status" value="1"/>
</dbReference>
<dbReference type="FunFam" id="1.20.90.10:FF:000007">
    <property type="entry name" value="Acidic phospholipase A2"/>
    <property type="match status" value="1"/>
</dbReference>
<dbReference type="Gene3D" id="1.20.90.10">
    <property type="entry name" value="Phospholipase A2 domain"/>
    <property type="match status" value="1"/>
</dbReference>
<dbReference type="InterPro" id="IPR001211">
    <property type="entry name" value="PLipase_A2"/>
</dbReference>
<dbReference type="InterPro" id="IPR033112">
    <property type="entry name" value="PLipase_A2_Asp_AS"/>
</dbReference>
<dbReference type="InterPro" id="IPR016090">
    <property type="entry name" value="PLipase_A2_dom"/>
</dbReference>
<dbReference type="InterPro" id="IPR036444">
    <property type="entry name" value="PLipase_A2_dom_sf"/>
</dbReference>
<dbReference type="InterPro" id="IPR033113">
    <property type="entry name" value="PLipase_A2_His_AS"/>
</dbReference>
<dbReference type="PANTHER" id="PTHR11716:SF94">
    <property type="entry name" value="PHOSPHOLIPASE A2"/>
    <property type="match status" value="1"/>
</dbReference>
<dbReference type="PANTHER" id="PTHR11716">
    <property type="entry name" value="PHOSPHOLIPASE A2 FAMILY MEMBER"/>
    <property type="match status" value="1"/>
</dbReference>
<dbReference type="Pfam" id="PF00068">
    <property type="entry name" value="Phospholip_A2_1"/>
    <property type="match status" value="1"/>
</dbReference>
<dbReference type="PRINTS" id="PR00389">
    <property type="entry name" value="PHPHLIPASEA2"/>
</dbReference>
<dbReference type="SMART" id="SM00085">
    <property type="entry name" value="PA2c"/>
    <property type="match status" value="1"/>
</dbReference>
<dbReference type="SUPFAM" id="SSF48619">
    <property type="entry name" value="Phospholipase A2, PLA2"/>
    <property type="match status" value="1"/>
</dbReference>
<dbReference type="PROSITE" id="PS00119">
    <property type="entry name" value="PA2_ASP"/>
    <property type="match status" value="1"/>
</dbReference>
<dbReference type="PROSITE" id="PS00118">
    <property type="entry name" value="PA2_HIS"/>
    <property type="match status" value="1"/>
</dbReference>
<organism>
    <name type="scientific">Micrurus altirostris</name>
    <name type="common">Uruguayan coral snake</name>
    <name type="synonym">Elaps altirostris</name>
    <dbReference type="NCBI Taxonomy" id="129457"/>
    <lineage>
        <taxon>Eukaryota</taxon>
        <taxon>Metazoa</taxon>
        <taxon>Chordata</taxon>
        <taxon>Craniata</taxon>
        <taxon>Vertebrata</taxon>
        <taxon>Euteleostomi</taxon>
        <taxon>Lepidosauria</taxon>
        <taxon>Squamata</taxon>
        <taxon>Bifurcata</taxon>
        <taxon>Unidentata</taxon>
        <taxon>Episquamata</taxon>
        <taxon>Toxicofera</taxon>
        <taxon>Serpentes</taxon>
        <taxon>Colubroidea</taxon>
        <taxon>Elapidae</taxon>
        <taxon>Elapinae</taxon>
        <taxon>Micrurus</taxon>
    </lineage>
</organism>
<feature type="signal peptide" evidence="2">
    <location>
        <begin position="1"/>
        <end position="21"/>
    </location>
</feature>
<feature type="propeptide" id="PRO_0000422888">
    <location>
        <begin position="22"/>
        <end position="27"/>
    </location>
</feature>
<feature type="chain" id="PRO_0000422889" description="Phospholipase A2">
    <location>
        <begin position="28"/>
        <end position="140"/>
    </location>
</feature>
<feature type="active site" evidence="1">
    <location>
        <position position="73"/>
    </location>
</feature>
<feature type="active site" evidence="1">
    <location>
        <position position="119"/>
    </location>
</feature>
<feature type="binding site" evidence="1">
    <location>
        <position position="53"/>
    </location>
    <ligand>
        <name>Ca(2+)</name>
        <dbReference type="ChEBI" id="CHEBI:29108"/>
    </ligand>
</feature>
<feature type="binding site" evidence="1">
    <location>
        <position position="55"/>
    </location>
    <ligand>
        <name>Ca(2+)</name>
        <dbReference type="ChEBI" id="CHEBI:29108"/>
    </ligand>
</feature>
<feature type="binding site" evidence="1">
    <location>
        <position position="57"/>
    </location>
    <ligand>
        <name>Ca(2+)</name>
        <dbReference type="ChEBI" id="CHEBI:29108"/>
    </ligand>
</feature>
<feature type="binding site" evidence="1">
    <location>
        <position position="74"/>
    </location>
    <ligand>
        <name>Ca(2+)</name>
        <dbReference type="ChEBI" id="CHEBI:29108"/>
    </ligand>
</feature>
<feature type="glycosylation site" description="N-linked (GlcNAc...) asparagine" evidence="2">
    <location>
        <position position="39"/>
    </location>
</feature>
<feature type="glycosylation site" description="N-linked (GlcNAc...) asparagine" evidence="2">
    <location>
        <position position="107"/>
    </location>
</feature>
<feature type="disulfide bond" evidence="1">
    <location>
        <begin position="38"/>
        <end position="97"/>
    </location>
</feature>
<feature type="disulfide bond" evidence="1">
    <location>
        <begin position="52"/>
        <end position="139"/>
    </location>
</feature>
<feature type="disulfide bond" evidence="1">
    <location>
        <begin position="54"/>
        <end position="70"/>
    </location>
</feature>
<feature type="disulfide bond" evidence="1">
    <location>
        <begin position="69"/>
        <end position="125"/>
    </location>
</feature>
<feature type="disulfide bond" evidence="1">
    <location>
        <begin position="76"/>
        <end position="118"/>
    </location>
</feature>
<feature type="disulfide bond" evidence="1">
    <location>
        <begin position="86"/>
        <end position="111"/>
    </location>
</feature>
<feature type="disulfide bond" evidence="1">
    <location>
        <begin position="104"/>
        <end position="116"/>
    </location>
</feature>
<protein>
    <recommendedName>
        <fullName>Phospholipase A2</fullName>
        <ecNumber>3.1.1.4</ecNumber>
    </recommendedName>
    <alternativeName>
        <fullName>MALT0026C</fullName>
    </alternativeName>
</protein>
<evidence type="ECO:0000250" key="1"/>
<evidence type="ECO:0000255" key="2"/>
<evidence type="ECO:0000255" key="3">
    <source>
        <dbReference type="PROSITE-ProRule" id="PRU10035"/>
    </source>
</evidence>
<evidence type="ECO:0000255" key="4">
    <source>
        <dbReference type="PROSITE-ProRule" id="PRU10036"/>
    </source>
</evidence>
<evidence type="ECO:0000305" key="5"/>
<sequence length="140" mass="15441">MNPAHLLVLAAVCISLSGASSIAPQPLNLIQFGNMIQCNNTRPSLDFSGYGCYCGRGGSGTPVDELDRCCQVHDNCYGEAETVHECDPYWTFYSYECSEGKLTCKDNNTKCKEFVCNCDREAANCFAKAPYIDSNYKNCK</sequence>
<proteinExistence type="evidence at transcript level"/>
<reference key="1">
    <citation type="journal article" date="2011" name="J. Proteomics">
        <title>Snake venomics and venom gland transcriptomic analysis of Brazilian coral snakes, Micrurus altirostris and M. corallinus.</title>
        <authorList>
            <person name="Correa-Netto C."/>
            <person name="Junqueira-de-Azevedo Ide L."/>
            <person name="Silva D.A."/>
            <person name="Ho P.L."/>
            <person name="Leitao-de-Araujo M."/>
            <person name="Alves M.L."/>
            <person name="Sanz L."/>
            <person name="Foguel D."/>
            <person name="Zingali R.B."/>
            <person name="Calvete J.J."/>
        </authorList>
    </citation>
    <scope>NUCLEOTIDE SEQUENCE [MRNA]</scope>
    <source>
        <tissue>Venom gland</tissue>
    </source>
</reference>
<keyword id="KW-0106">Calcium</keyword>
<keyword id="KW-1015">Disulfide bond</keyword>
<keyword id="KW-0325">Glycoprotein</keyword>
<keyword id="KW-0378">Hydrolase</keyword>
<keyword id="KW-0442">Lipid degradation</keyword>
<keyword id="KW-0443">Lipid metabolism</keyword>
<keyword id="KW-0479">Metal-binding</keyword>
<keyword id="KW-0964">Secreted</keyword>
<keyword id="KW-0732">Signal</keyword>
<keyword id="KW-0800">Toxin</keyword>
<name>PA226_MICAT</name>